<comment type="function">
    <text evidence="2">Catalyzes the formation of N(7)-methylguanine at position 46 (m7G46) in tRNA.</text>
</comment>
<comment type="catalytic activity">
    <reaction evidence="2">
        <text>guanosine(46) in tRNA + S-adenosyl-L-methionine = N(7)-methylguanosine(46) in tRNA + S-adenosyl-L-homocysteine</text>
        <dbReference type="Rhea" id="RHEA:42708"/>
        <dbReference type="Rhea" id="RHEA-COMP:10188"/>
        <dbReference type="Rhea" id="RHEA-COMP:10189"/>
        <dbReference type="ChEBI" id="CHEBI:57856"/>
        <dbReference type="ChEBI" id="CHEBI:59789"/>
        <dbReference type="ChEBI" id="CHEBI:74269"/>
        <dbReference type="ChEBI" id="CHEBI:74480"/>
        <dbReference type="EC" id="2.1.1.33"/>
    </reaction>
</comment>
<comment type="pathway">
    <text evidence="2">tRNA modification; N(7)-methylguanine-tRNA biosynthesis.</text>
</comment>
<comment type="similarity">
    <text evidence="2">Belongs to the class I-like SAM-binding methyltransferase superfamily. TrmB family.</text>
</comment>
<keyword id="KW-0489">Methyltransferase</keyword>
<keyword id="KW-1185">Reference proteome</keyword>
<keyword id="KW-0949">S-adenosyl-L-methionine</keyword>
<keyword id="KW-0808">Transferase</keyword>
<keyword id="KW-0819">tRNA processing</keyword>
<evidence type="ECO:0000250" key="1"/>
<evidence type="ECO:0000255" key="2">
    <source>
        <dbReference type="HAMAP-Rule" id="MF_01057"/>
    </source>
</evidence>
<proteinExistence type="inferred from homology"/>
<reference key="1">
    <citation type="journal article" date="2005" name="J. Bacteriol.">
        <title>Swine and poultry pathogens: the complete genome sequences of two strains of Mycoplasma hyopneumoniae and a strain of Mycoplasma synoviae.</title>
        <authorList>
            <person name="Vasconcelos A.T.R."/>
            <person name="Ferreira H.B."/>
            <person name="Bizarro C.V."/>
            <person name="Bonatto S.L."/>
            <person name="Carvalho M.O."/>
            <person name="Pinto P.M."/>
            <person name="Almeida D.F."/>
            <person name="Almeida L.G.P."/>
            <person name="Almeida R."/>
            <person name="Alves-Junior L."/>
            <person name="Assuncao E.N."/>
            <person name="Azevedo V.A.C."/>
            <person name="Bogo M.R."/>
            <person name="Brigido M.M."/>
            <person name="Brocchi M."/>
            <person name="Burity H.A."/>
            <person name="Camargo A.A."/>
            <person name="Camargo S.S."/>
            <person name="Carepo M.S."/>
            <person name="Carraro D.M."/>
            <person name="de Mattos Cascardo J.C."/>
            <person name="Castro L.A."/>
            <person name="Cavalcanti G."/>
            <person name="Chemale G."/>
            <person name="Collevatti R.G."/>
            <person name="Cunha C.W."/>
            <person name="Dallagiovanna B."/>
            <person name="Dambros B.P."/>
            <person name="Dellagostin O.A."/>
            <person name="Falcao C."/>
            <person name="Fantinatti-Garboggini F."/>
            <person name="Felipe M.S.S."/>
            <person name="Fiorentin L."/>
            <person name="Franco G.R."/>
            <person name="Freitas N.S.A."/>
            <person name="Frias D."/>
            <person name="Grangeiro T.B."/>
            <person name="Grisard E.C."/>
            <person name="Guimaraes C.T."/>
            <person name="Hungria M."/>
            <person name="Jardim S.N."/>
            <person name="Krieger M.A."/>
            <person name="Laurino J.P."/>
            <person name="Lima L.F.A."/>
            <person name="Lopes M.I."/>
            <person name="Loreto E.L.S."/>
            <person name="Madeira H.M.F."/>
            <person name="Manfio G.P."/>
            <person name="Maranhao A.Q."/>
            <person name="Martinkovics C.T."/>
            <person name="Medeiros S.R.B."/>
            <person name="Moreira M.A.M."/>
            <person name="Neiva M."/>
            <person name="Ramalho-Neto C.E."/>
            <person name="Nicolas M.F."/>
            <person name="Oliveira S.C."/>
            <person name="Paixao R.F.C."/>
            <person name="Pedrosa F.O."/>
            <person name="Pena S.D.J."/>
            <person name="Pereira M."/>
            <person name="Pereira-Ferrari L."/>
            <person name="Piffer I."/>
            <person name="Pinto L.S."/>
            <person name="Potrich D.P."/>
            <person name="Salim A.C.M."/>
            <person name="Santos F.R."/>
            <person name="Schmitt R."/>
            <person name="Schneider M.P.C."/>
            <person name="Schrank A."/>
            <person name="Schrank I.S."/>
            <person name="Schuck A.F."/>
            <person name="Seuanez H.N."/>
            <person name="Silva D.W."/>
            <person name="Silva R."/>
            <person name="Silva S.C."/>
            <person name="Soares C.M.A."/>
            <person name="Souza K.R.L."/>
            <person name="Souza R.C."/>
            <person name="Staats C.C."/>
            <person name="Steffens M.B.R."/>
            <person name="Teixeira S.M.R."/>
            <person name="Urmenyi T.P."/>
            <person name="Vainstein M.H."/>
            <person name="Zuccherato L.W."/>
            <person name="Simpson A.J.G."/>
            <person name="Zaha A."/>
        </authorList>
    </citation>
    <scope>NUCLEOTIDE SEQUENCE [LARGE SCALE GENOMIC DNA]</scope>
    <source>
        <strain>53</strain>
    </source>
</reference>
<dbReference type="EC" id="2.1.1.33" evidence="2"/>
<dbReference type="EMBL" id="AE017245">
    <property type="protein sequence ID" value="AAZ43534.1"/>
    <property type="molecule type" value="Genomic_DNA"/>
</dbReference>
<dbReference type="RefSeq" id="WP_011283277.1">
    <property type="nucleotide sequence ID" value="NC_007294.1"/>
</dbReference>
<dbReference type="SMR" id="Q4A6T7"/>
<dbReference type="STRING" id="262723.MS53_0113"/>
<dbReference type="KEGG" id="msy:MS53_0113"/>
<dbReference type="eggNOG" id="COG0220">
    <property type="taxonomic scope" value="Bacteria"/>
</dbReference>
<dbReference type="HOGENOM" id="CLU_050910_2_1_14"/>
<dbReference type="OrthoDB" id="9802090at2"/>
<dbReference type="UniPathway" id="UPA00989"/>
<dbReference type="Proteomes" id="UP000000549">
    <property type="component" value="Chromosome"/>
</dbReference>
<dbReference type="GO" id="GO:0043527">
    <property type="term" value="C:tRNA methyltransferase complex"/>
    <property type="evidence" value="ECO:0007669"/>
    <property type="project" value="TreeGrafter"/>
</dbReference>
<dbReference type="GO" id="GO:0008176">
    <property type="term" value="F:tRNA (guanine(46)-N7)-methyltransferase activity"/>
    <property type="evidence" value="ECO:0007669"/>
    <property type="project" value="UniProtKB-UniRule"/>
</dbReference>
<dbReference type="CDD" id="cd02440">
    <property type="entry name" value="AdoMet_MTases"/>
    <property type="match status" value="1"/>
</dbReference>
<dbReference type="Gene3D" id="3.40.50.150">
    <property type="entry name" value="Vaccinia Virus protein VP39"/>
    <property type="match status" value="1"/>
</dbReference>
<dbReference type="HAMAP" id="MF_01057">
    <property type="entry name" value="tRNA_methyltr_TrmB"/>
    <property type="match status" value="1"/>
</dbReference>
<dbReference type="InterPro" id="IPR029063">
    <property type="entry name" value="SAM-dependent_MTases_sf"/>
</dbReference>
<dbReference type="InterPro" id="IPR003358">
    <property type="entry name" value="tRNA_(Gua-N-7)_MeTrfase_Trmb"/>
</dbReference>
<dbReference type="InterPro" id="IPR055361">
    <property type="entry name" value="tRNA_methyltr_TrmB_bact"/>
</dbReference>
<dbReference type="NCBIfam" id="TIGR00091">
    <property type="entry name" value="tRNA (guanosine(46)-N7)-methyltransferase TrmB"/>
    <property type="match status" value="1"/>
</dbReference>
<dbReference type="PANTHER" id="PTHR23417">
    <property type="entry name" value="3-DEOXY-D-MANNO-OCTULOSONIC-ACID TRANSFERASE/TRNA GUANINE-N 7 - -METHYLTRANSFERASE"/>
    <property type="match status" value="1"/>
</dbReference>
<dbReference type="PANTHER" id="PTHR23417:SF14">
    <property type="entry name" value="PENTACOTRIPEPTIDE-REPEAT REGION OF PRORP DOMAIN-CONTAINING PROTEIN"/>
    <property type="match status" value="1"/>
</dbReference>
<dbReference type="Pfam" id="PF02390">
    <property type="entry name" value="Methyltransf_4"/>
    <property type="match status" value="1"/>
</dbReference>
<dbReference type="SUPFAM" id="SSF53335">
    <property type="entry name" value="S-adenosyl-L-methionine-dependent methyltransferases"/>
    <property type="match status" value="1"/>
</dbReference>
<dbReference type="PROSITE" id="PS51625">
    <property type="entry name" value="SAM_MT_TRMB"/>
    <property type="match status" value="1"/>
</dbReference>
<name>TRMB_MYCS5</name>
<accession>Q4A6T7</accession>
<feature type="chain" id="PRO_0000229176" description="tRNA (guanine-N(7)-)-methyltransferase">
    <location>
        <begin position="1"/>
        <end position="205"/>
    </location>
</feature>
<feature type="region of interest" description="Interaction with RNA" evidence="2">
    <location>
        <begin position="113"/>
        <end position="118"/>
    </location>
</feature>
<feature type="active site" evidence="1">
    <location>
        <position position="107"/>
    </location>
</feature>
<feature type="binding site" evidence="2">
    <location>
        <position position="34"/>
    </location>
    <ligand>
        <name>S-adenosyl-L-methionine</name>
        <dbReference type="ChEBI" id="CHEBI:59789"/>
    </ligand>
</feature>
<feature type="binding site" evidence="2">
    <location>
        <position position="59"/>
    </location>
    <ligand>
        <name>S-adenosyl-L-methionine</name>
        <dbReference type="ChEBI" id="CHEBI:59789"/>
    </ligand>
</feature>
<feature type="binding site" evidence="2">
    <location>
        <position position="86"/>
    </location>
    <ligand>
        <name>S-adenosyl-L-methionine</name>
        <dbReference type="ChEBI" id="CHEBI:59789"/>
    </ligand>
</feature>
<feature type="binding site" evidence="2">
    <location>
        <position position="107"/>
    </location>
    <ligand>
        <name>S-adenosyl-L-methionine</name>
        <dbReference type="ChEBI" id="CHEBI:59789"/>
    </ligand>
</feature>
<feature type="binding site" evidence="2">
    <location>
        <position position="111"/>
    </location>
    <ligand>
        <name>substrate</name>
    </ligand>
</feature>
<feature type="binding site" evidence="2">
    <location>
        <position position="144"/>
    </location>
    <ligand>
        <name>substrate</name>
    </ligand>
</feature>
<feature type="binding site" evidence="2">
    <location>
        <begin position="182"/>
        <end position="185"/>
    </location>
    <ligand>
        <name>substrate</name>
    </ligand>
</feature>
<organism>
    <name type="scientific">Mycoplasmopsis synoviae (strain 53)</name>
    <name type="common">Mycoplasma synoviae</name>
    <dbReference type="NCBI Taxonomy" id="262723"/>
    <lineage>
        <taxon>Bacteria</taxon>
        <taxon>Bacillati</taxon>
        <taxon>Mycoplasmatota</taxon>
        <taxon>Mycoplasmoidales</taxon>
        <taxon>Metamycoplasmataceae</taxon>
        <taxon>Mycoplasmopsis</taxon>
    </lineage>
</organism>
<gene>
    <name evidence="2" type="primary">trmB</name>
    <name type="ordered locus">MS53_0113</name>
</gene>
<protein>
    <recommendedName>
        <fullName evidence="2">tRNA (guanine-N(7)-)-methyltransferase</fullName>
        <ecNumber evidence="2">2.1.1.33</ecNumber>
    </recommendedName>
    <alternativeName>
        <fullName evidence="2">tRNA (guanine(46)-N(7))-methyltransferase</fullName>
    </alternativeName>
    <alternativeName>
        <fullName evidence="2">tRNA(m7G46)-methyltransferase</fullName>
    </alternativeName>
</protein>
<sequence>MRLRNDKFALSELNEFKFFIKNYPFNIKEDDILEIGSGKGEMISQMALLNPNQRFIAIEKYPTVAKKIMQKIKELNLENLYISCIDASKLSENFIGKTNTIWLTFSDPWPKKRHEKRRLTYKSFLDQYKFLLKDKNSNFYLKTDNDLFFNYSLESLQENNWNLKFVTGDLHNSIYNETNIKTGYEIKWMDKTKINFLIASKGENA</sequence>